<reference key="1">
    <citation type="journal article" date="2008" name="PLoS ONE">
        <title>Comparative analysis of Acinetobacters: three genomes for three lifestyles.</title>
        <authorList>
            <person name="Vallenet D."/>
            <person name="Nordmann P."/>
            <person name="Barbe V."/>
            <person name="Poirel L."/>
            <person name="Mangenot S."/>
            <person name="Bataille E."/>
            <person name="Dossat C."/>
            <person name="Gas S."/>
            <person name="Kreimeyer A."/>
            <person name="Lenoble P."/>
            <person name="Oztas S."/>
            <person name="Poulain J."/>
            <person name="Segurens B."/>
            <person name="Robert C."/>
            <person name="Abergel C."/>
            <person name="Claverie J.-M."/>
            <person name="Raoult D."/>
            <person name="Medigue C."/>
            <person name="Weissenbach J."/>
            <person name="Cruveiller S."/>
        </authorList>
    </citation>
    <scope>NUCLEOTIDE SEQUENCE [LARGE SCALE GENOMIC DNA]</scope>
    <source>
        <strain>AYE</strain>
    </source>
</reference>
<keyword id="KW-0067">ATP-binding</keyword>
<keyword id="KW-0418">Kinase</keyword>
<keyword id="KW-0460">Magnesium</keyword>
<keyword id="KW-0479">Metal-binding</keyword>
<keyword id="KW-0547">Nucleotide-binding</keyword>
<keyword id="KW-0784">Thiamine biosynthesis</keyword>
<keyword id="KW-0808">Transferase</keyword>
<sequence>MNSTSNLIEQVIEAWQNMQAKTPLVQCITNSVAANYTANVLLASGASPAMIDNPYEAESFTKISSALSINLGTPTSEQMQAMQISAKTAQLNNVPWVLDPVGYGPILAWRSQMTDELLQFKPSVIRGNASEISTLAGNQVQSKGVDSTLSSDQAYQQAFSLLTHASCIAISGESDYILSNEVDAVIQVNGGSPLQPKITATGCALGALIAAYSAVTTPTIAALSAHIHFAIAGKLAANQAQTMGSFSSIFMDYIHMLDANLIEQYADVKLLNKQA</sequence>
<protein>
    <recommendedName>
        <fullName evidence="1">Hydroxyethylthiazole kinase</fullName>
        <ecNumber evidence="1">2.7.1.50</ecNumber>
    </recommendedName>
    <alternativeName>
        <fullName evidence="1">4-methyl-5-beta-hydroxyethylthiazole kinase</fullName>
        <shortName evidence="1">TH kinase</shortName>
        <shortName evidence="1">Thz kinase</shortName>
    </alternativeName>
</protein>
<name>THIM_ACIBY</name>
<evidence type="ECO:0000255" key="1">
    <source>
        <dbReference type="HAMAP-Rule" id="MF_00228"/>
    </source>
</evidence>
<comment type="function">
    <text evidence="1">Catalyzes the phosphorylation of the hydroxyl group of 4-methyl-5-beta-hydroxyethylthiazole (THZ).</text>
</comment>
<comment type="catalytic activity">
    <reaction evidence="1">
        <text>5-(2-hydroxyethyl)-4-methylthiazole + ATP = 4-methyl-5-(2-phosphooxyethyl)-thiazole + ADP + H(+)</text>
        <dbReference type="Rhea" id="RHEA:24212"/>
        <dbReference type="ChEBI" id="CHEBI:15378"/>
        <dbReference type="ChEBI" id="CHEBI:17957"/>
        <dbReference type="ChEBI" id="CHEBI:30616"/>
        <dbReference type="ChEBI" id="CHEBI:58296"/>
        <dbReference type="ChEBI" id="CHEBI:456216"/>
        <dbReference type="EC" id="2.7.1.50"/>
    </reaction>
</comment>
<comment type="cofactor">
    <cofactor evidence="1">
        <name>Mg(2+)</name>
        <dbReference type="ChEBI" id="CHEBI:18420"/>
    </cofactor>
</comment>
<comment type="pathway">
    <text evidence="1">Cofactor biosynthesis; thiamine diphosphate biosynthesis; 4-methyl-5-(2-phosphoethyl)-thiazole from 5-(2-hydroxyethyl)-4-methylthiazole: step 1/1.</text>
</comment>
<comment type="similarity">
    <text evidence="1">Belongs to the Thz kinase family.</text>
</comment>
<proteinExistence type="inferred from homology"/>
<feature type="chain" id="PRO_0000383814" description="Hydroxyethylthiazole kinase">
    <location>
        <begin position="1"/>
        <end position="275"/>
    </location>
</feature>
<feature type="binding site" evidence="1">
    <location>
        <position position="50"/>
    </location>
    <ligand>
        <name>substrate</name>
    </ligand>
</feature>
<feature type="binding site" evidence="1">
    <location>
        <position position="126"/>
    </location>
    <ligand>
        <name>ATP</name>
        <dbReference type="ChEBI" id="CHEBI:30616"/>
    </ligand>
</feature>
<feature type="binding site" evidence="1">
    <location>
        <position position="171"/>
    </location>
    <ligand>
        <name>ATP</name>
        <dbReference type="ChEBI" id="CHEBI:30616"/>
    </ligand>
</feature>
<feature type="binding site" evidence="1">
    <location>
        <position position="200"/>
    </location>
    <ligand>
        <name>substrate</name>
    </ligand>
</feature>
<organism>
    <name type="scientific">Acinetobacter baumannii (strain AYE)</name>
    <dbReference type="NCBI Taxonomy" id="509173"/>
    <lineage>
        <taxon>Bacteria</taxon>
        <taxon>Pseudomonadati</taxon>
        <taxon>Pseudomonadota</taxon>
        <taxon>Gammaproteobacteria</taxon>
        <taxon>Moraxellales</taxon>
        <taxon>Moraxellaceae</taxon>
        <taxon>Acinetobacter</taxon>
        <taxon>Acinetobacter calcoaceticus/baumannii complex</taxon>
    </lineage>
</organism>
<accession>B0V782</accession>
<dbReference type="EC" id="2.7.1.50" evidence="1"/>
<dbReference type="EMBL" id="CU459141">
    <property type="protein sequence ID" value="CAM86373.1"/>
    <property type="molecule type" value="Genomic_DNA"/>
</dbReference>
<dbReference type="RefSeq" id="WP_001089458.1">
    <property type="nucleotide sequence ID" value="NZ_JBDGFB010000016.1"/>
</dbReference>
<dbReference type="SMR" id="B0V782"/>
<dbReference type="EnsemblBacteria" id="CAM86373">
    <property type="protein sequence ID" value="CAM86373"/>
    <property type="gene ID" value="ABAYE1466"/>
</dbReference>
<dbReference type="KEGG" id="aby:ABAYE1466"/>
<dbReference type="HOGENOM" id="CLU_019943_0_1_6"/>
<dbReference type="UniPathway" id="UPA00060">
    <property type="reaction ID" value="UER00139"/>
</dbReference>
<dbReference type="GO" id="GO:0005524">
    <property type="term" value="F:ATP binding"/>
    <property type="evidence" value="ECO:0007669"/>
    <property type="project" value="UniProtKB-UniRule"/>
</dbReference>
<dbReference type="GO" id="GO:0004417">
    <property type="term" value="F:hydroxyethylthiazole kinase activity"/>
    <property type="evidence" value="ECO:0007669"/>
    <property type="project" value="UniProtKB-UniRule"/>
</dbReference>
<dbReference type="GO" id="GO:0000287">
    <property type="term" value="F:magnesium ion binding"/>
    <property type="evidence" value="ECO:0007669"/>
    <property type="project" value="UniProtKB-UniRule"/>
</dbReference>
<dbReference type="GO" id="GO:0009228">
    <property type="term" value="P:thiamine biosynthetic process"/>
    <property type="evidence" value="ECO:0007669"/>
    <property type="project" value="UniProtKB-KW"/>
</dbReference>
<dbReference type="GO" id="GO:0009229">
    <property type="term" value="P:thiamine diphosphate biosynthetic process"/>
    <property type="evidence" value="ECO:0007669"/>
    <property type="project" value="UniProtKB-UniRule"/>
</dbReference>
<dbReference type="CDD" id="cd01170">
    <property type="entry name" value="THZ_kinase"/>
    <property type="match status" value="1"/>
</dbReference>
<dbReference type="Gene3D" id="3.40.1190.20">
    <property type="match status" value="1"/>
</dbReference>
<dbReference type="HAMAP" id="MF_00228">
    <property type="entry name" value="Thz_kinase"/>
    <property type="match status" value="1"/>
</dbReference>
<dbReference type="InterPro" id="IPR000417">
    <property type="entry name" value="Hyethyz_kinase"/>
</dbReference>
<dbReference type="InterPro" id="IPR029056">
    <property type="entry name" value="Ribokinase-like"/>
</dbReference>
<dbReference type="NCBIfam" id="NF006830">
    <property type="entry name" value="PRK09355.1"/>
    <property type="match status" value="1"/>
</dbReference>
<dbReference type="Pfam" id="PF02110">
    <property type="entry name" value="HK"/>
    <property type="match status" value="1"/>
</dbReference>
<dbReference type="PIRSF" id="PIRSF000513">
    <property type="entry name" value="Thz_kinase"/>
    <property type="match status" value="1"/>
</dbReference>
<dbReference type="PRINTS" id="PR01099">
    <property type="entry name" value="HYETHTZKNASE"/>
</dbReference>
<dbReference type="SUPFAM" id="SSF53613">
    <property type="entry name" value="Ribokinase-like"/>
    <property type="match status" value="1"/>
</dbReference>
<gene>
    <name evidence="1" type="primary">thiM</name>
    <name type="ordered locus">ABAYE1466</name>
</gene>